<evidence type="ECO:0000255" key="1">
    <source>
        <dbReference type="HAMAP-Rule" id="MF_00392"/>
    </source>
</evidence>
<dbReference type="EC" id="2.4.1.182" evidence="1"/>
<dbReference type="EMBL" id="CP000439">
    <property type="protein sequence ID" value="ABK90344.1"/>
    <property type="molecule type" value="Genomic_DNA"/>
</dbReference>
<dbReference type="RefSeq" id="WP_003040462.1">
    <property type="nucleotide sequence ID" value="NC_008601.1"/>
</dbReference>
<dbReference type="SMR" id="A0Q7X9"/>
<dbReference type="CAZy" id="GT19">
    <property type="family name" value="Glycosyltransferase Family 19"/>
</dbReference>
<dbReference type="KEGG" id="ftn:FTN_1477"/>
<dbReference type="KEGG" id="ftx:AW25_524"/>
<dbReference type="BioCyc" id="FTUL401614:G1G75-1525-MONOMER"/>
<dbReference type="UniPathway" id="UPA00973"/>
<dbReference type="Proteomes" id="UP000000762">
    <property type="component" value="Chromosome"/>
</dbReference>
<dbReference type="GO" id="GO:0016020">
    <property type="term" value="C:membrane"/>
    <property type="evidence" value="ECO:0007669"/>
    <property type="project" value="GOC"/>
</dbReference>
<dbReference type="GO" id="GO:0008915">
    <property type="term" value="F:lipid-A-disaccharide synthase activity"/>
    <property type="evidence" value="ECO:0007669"/>
    <property type="project" value="UniProtKB-UniRule"/>
</dbReference>
<dbReference type="GO" id="GO:0005543">
    <property type="term" value="F:phospholipid binding"/>
    <property type="evidence" value="ECO:0007669"/>
    <property type="project" value="TreeGrafter"/>
</dbReference>
<dbReference type="GO" id="GO:0009245">
    <property type="term" value="P:lipid A biosynthetic process"/>
    <property type="evidence" value="ECO:0007669"/>
    <property type="project" value="UniProtKB-UniRule"/>
</dbReference>
<dbReference type="CDD" id="cd01635">
    <property type="entry name" value="Glycosyltransferase_GTB-type"/>
    <property type="match status" value="1"/>
</dbReference>
<dbReference type="Gene3D" id="3.40.50.2000">
    <property type="entry name" value="Glycogen Phosphorylase B"/>
    <property type="match status" value="2"/>
</dbReference>
<dbReference type="HAMAP" id="MF_00392">
    <property type="entry name" value="LpxB"/>
    <property type="match status" value="1"/>
</dbReference>
<dbReference type="InterPro" id="IPR003835">
    <property type="entry name" value="Glyco_trans_19"/>
</dbReference>
<dbReference type="NCBIfam" id="TIGR00215">
    <property type="entry name" value="lpxB"/>
    <property type="match status" value="1"/>
</dbReference>
<dbReference type="PANTHER" id="PTHR30372">
    <property type="entry name" value="LIPID-A-DISACCHARIDE SYNTHASE"/>
    <property type="match status" value="1"/>
</dbReference>
<dbReference type="PANTHER" id="PTHR30372:SF4">
    <property type="entry name" value="LIPID-A-DISACCHARIDE SYNTHASE, MITOCHONDRIAL-RELATED"/>
    <property type="match status" value="1"/>
</dbReference>
<dbReference type="Pfam" id="PF02684">
    <property type="entry name" value="LpxB"/>
    <property type="match status" value="1"/>
</dbReference>
<dbReference type="SUPFAM" id="SSF53756">
    <property type="entry name" value="UDP-Glycosyltransferase/glycogen phosphorylase"/>
    <property type="match status" value="1"/>
</dbReference>
<feature type="chain" id="PRO_1000049397" description="Lipid-A-disaccharide synthase">
    <location>
        <begin position="1"/>
        <end position="380"/>
    </location>
</feature>
<reference key="1">
    <citation type="journal article" date="2007" name="Genome Biol.">
        <title>Comparison of Francisella tularensis genomes reveals evolutionary events associated with the emergence of human pathogenic strains.</title>
        <authorList>
            <person name="Rohmer L."/>
            <person name="Fong C."/>
            <person name="Abmayr S."/>
            <person name="Wasnick M."/>
            <person name="Larson Freeman T.J."/>
            <person name="Radey M."/>
            <person name="Guina T."/>
            <person name="Svensson K."/>
            <person name="Hayden H.S."/>
            <person name="Jacobs M."/>
            <person name="Gallagher L.A."/>
            <person name="Manoil C."/>
            <person name="Ernst R.K."/>
            <person name="Drees B."/>
            <person name="Buckley D."/>
            <person name="Haugen E."/>
            <person name="Bovee D."/>
            <person name="Zhou Y."/>
            <person name="Chang J."/>
            <person name="Levy R."/>
            <person name="Lim R."/>
            <person name="Gillett W."/>
            <person name="Guenthener D."/>
            <person name="Kang A."/>
            <person name="Shaffer S.A."/>
            <person name="Taylor G."/>
            <person name="Chen J."/>
            <person name="Gallis B."/>
            <person name="D'Argenio D.A."/>
            <person name="Forsman M."/>
            <person name="Olson M.V."/>
            <person name="Goodlett D.R."/>
            <person name="Kaul R."/>
            <person name="Miller S.I."/>
            <person name="Brittnacher M.J."/>
        </authorList>
    </citation>
    <scope>NUCLEOTIDE SEQUENCE [LARGE SCALE GENOMIC DNA]</scope>
    <source>
        <strain>U112</strain>
    </source>
</reference>
<accession>A0Q7X9</accession>
<organism>
    <name type="scientific">Francisella tularensis subsp. novicida (strain U112)</name>
    <dbReference type="NCBI Taxonomy" id="401614"/>
    <lineage>
        <taxon>Bacteria</taxon>
        <taxon>Pseudomonadati</taxon>
        <taxon>Pseudomonadota</taxon>
        <taxon>Gammaproteobacteria</taxon>
        <taxon>Thiotrichales</taxon>
        <taxon>Francisellaceae</taxon>
        <taxon>Francisella</taxon>
    </lineage>
</organism>
<comment type="function">
    <text evidence="1">Condensation of UDP-2,3-diacylglucosamine and 2,3-diacylglucosamine-1-phosphate to form lipid A disaccharide, a precursor of lipid A, a phosphorylated glycolipid that anchors the lipopolysaccharide to the outer membrane of the cell.</text>
</comment>
<comment type="catalytic activity">
    <reaction evidence="1">
        <text>a lipid X + a UDP-2-N,3-O-bis[(3R)-3-hydroxyacyl]-alpha-D-glucosamine = a lipid A disaccharide + UDP + H(+)</text>
        <dbReference type="Rhea" id="RHEA:67828"/>
        <dbReference type="ChEBI" id="CHEBI:15378"/>
        <dbReference type="ChEBI" id="CHEBI:58223"/>
        <dbReference type="ChEBI" id="CHEBI:137748"/>
        <dbReference type="ChEBI" id="CHEBI:176338"/>
        <dbReference type="ChEBI" id="CHEBI:176343"/>
        <dbReference type="EC" id="2.4.1.182"/>
    </reaction>
</comment>
<comment type="pathway">
    <text evidence="1">Bacterial outer membrane biogenesis; LPS lipid A biosynthesis.</text>
</comment>
<comment type="similarity">
    <text evidence="1">Belongs to the LpxB family.</text>
</comment>
<sequence length="380" mass="43117">MRIGIVAGELSGDQLGGTLVEALKQKYPNAIIEGIGGPKMAAAGFKSLYPMDALSLIGFLEIISKGLRILSIRRKIINYFKQNKPDIFIGIDAPDFNLTVEKELRSVGIKTIHYVSPKIWVWREYRIKKIRKATDKILAILPFETEYYKNRHKFEAIYVGHPLAKNIPIHIDRTKYRDKLGLKGNSLPILSVLPGSRTTEVSRLLPLFLLALQKLVDAGYKFKAIMPLAKPSLKPLFAKYKEQIDSLGIEVFETNSHDVLKASDLSLLASGTATLEAMLCKLPMVVGYKLSWLSALIGRMLIGNHSYWAFPNILHKSEIIKELIQEDCTVDNLFSELKRLFDDKQRNDYIVEEFEKIHKEMVIDTESKIIQVLNTMIEKS</sequence>
<protein>
    <recommendedName>
        <fullName evidence="1">Lipid-A-disaccharide synthase</fullName>
        <ecNumber evidence="1">2.4.1.182</ecNumber>
    </recommendedName>
</protein>
<name>LPXB_FRATN</name>
<gene>
    <name evidence="1" type="primary">lpxB</name>
    <name type="ordered locus">FTN_1477</name>
</gene>
<keyword id="KW-0328">Glycosyltransferase</keyword>
<keyword id="KW-0441">Lipid A biosynthesis</keyword>
<keyword id="KW-0444">Lipid biosynthesis</keyword>
<keyword id="KW-0443">Lipid metabolism</keyword>
<keyword id="KW-0808">Transferase</keyword>
<proteinExistence type="inferred from homology"/>